<organism>
    <name type="scientific">Streptococcus thermophilus (strain CNRZ 1066)</name>
    <dbReference type="NCBI Taxonomy" id="299768"/>
    <lineage>
        <taxon>Bacteria</taxon>
        <taxon>Bacillati</taxon>
        <taxon>Bacillota</taxon>
        <taxon>Bacilli</taxon>
        <taxon>Lactobacillales</taxon>
        <taxon>Streptococcaceae</taxon>
        <taxon>Streptococcus</taxon>
    </lineage>
</organism>
<accession>Q5LYE2</accession>
<name>CODY_STRT1</name>
<feature type="chain" id="PRO_0000213248" description="Global transcriptional regulator CodY">
    <location>
        <begin position="1"/>
        <end position="261"/>
    </location>
</feature>
<feature type="DNA-binding region" description="H-T-H motif" evidence="1">
    <location>
        <begin position="207"/>
        <end position="226"/>
    </location>
</feature>
<feature type="region of interest" description="GAF domain" evidence="1">
    <location>
        <begin position="1"/>
        <end position="159"/>
    </location>
</feature>
<gene>
    <name evidence="1" type="primary">codY</name>
    <name type="ordered locus">str1635</name>
</gene>
<comment type="function">
    <text evidence="1">DNA-binding global transcriptional regulator which is involved in the adaptive response to starvation and acts by directly or indirectly controlling the expression of numerous genes in response to nutrient availability. During rapid exponential growth, CodY is highly active and represses genes whose products allow adaptation to nutrient depletion.</text>
</comment>
<comment type="subcellular location">
    <subcellularLocation>
        <location evidence="1">Cytoplasm</location>
    </subcellularLocation>
</comment>
<comment type="similarity">
    <text evidence="1">Belongs to the CodY family.</text>
</comment>
<evidence type="ECO:0000255" key="1">
    <source>
        <dbReference type="HAMAP-Rule" id="MF_00621"/>
    </source>
</evidence>
<proteinExistence type="inferred from homology"/>
<dbReference type="EMBL" id="CP000024">
    <property type="protein sequence ID" value="AAV63165.1"/>
    <property type="molecule type" value="Genomic_DNA"/>
</dbReference>
<dbReference type="RefSeq" id="WP_002951720.1">
    <property type="nucleotide sequence ID" value="NC_006449.1"/>
</dbReference>
<dbReference type="SMR" id="Q5LYE2"/>
<dbReference type="GeneID" id="66899381"/>
<dbReference type="KEGG" id="stc:str1635"/>
<dbReference type="HOGENOM" id="CLU_089581_0_0_9"/>
<dbReference type="GO" id="GO:0005737">
    <property type="term" value="C:cytoplasm"/>
    <property type="evidence" value="ECO:0007669"/>
    <property type="project" value="UniProtKB-SubCell"/>
</dbReference>
<dbReference type="GO" id="GO:0003677">
    <property type="term" value="F:DNA binding"/>
    <property type="evidence" value="ECO:0007669"/>
    <property type="project" value="UniProtKB-UniRule"/>
</dbReference>
<dbReference type="GO" id="GO:0003700">
    <property type="term" value="F:DNA-binding transcription factor activity"/>
    <property type="evidence" value="ECO:0007669"/>
    <property type="project" value="InterPro"/>
</dbReference>
<dbReference type="GO" id="GO:0005525">
    <property type="term" value="F:GTP binding"/>
    <property type="evidence" value="ECO:0007669"/>
    <property type="project" value="InterPro"/>
</dbReference>
<dbReference type="GO" id="GO:0045892">
    <property type="term" value="P:negative regulation of DNA-templated transcription"/>
    <property type="evidence" value="ECO:0007669"/>
    <property type="project" value="UniProtKB-UniRule"/>
</dbReference>
<dbReference type="CDD" id="cd00090">
    <property type="entry name" value="HTH_ARSR"/>
    <property type="match status" value="1"/>
</dbReference>
<dbReference type="FunFam" id="1.10.10.10:FF:000034">
    <property type="entry name" value="GTP-sensing transcriptional pleiotropic repressor CodY"/>
    <property type="match status" value="1"/>
</dbReference>
<dbReference type="FunFam" id="3.30.450.40:FF:000003">
    <property type="entry name" value="GTP-sensing transcriptional pleiotropic repressor CodY"/>
    <property type="match status" value="1"/>
</dbReference>
<dbReference type="Gene3D" id="3.30.450.40">
    <property type="match status" value="1"/>
</dbReference>
<dbReference type="Gene3D" id="1.10.10.10">
    <property type="entry name" value="Winged helix-like DNA-binding domain superfamily/Winged helix DNA-binding domain"/>
    <property type="match status" value="1"/>
</dbReference>
<dbReference type="HAMAP" id="MF_00621">
    <property type="entry name" value="HTH_type_CodY"/>
    <property type="match status" value="1"/>
</dbReference>
<dbReference type="InterPro" id="IPR011991">
    <property type="entry name" value="ArsR-like_HTH"/>
</dbReference>
<dbReference type="InterPro" id="IPR014154">
    <property type="entry name" value="CodY"/>
</dbReference>
<dbReference type="InterPro" id="IPR029016">
    <property type="entry name" value="GAF-like_dom_sf"/>
</dbReference>
<dbReference type="InterPro" id="IPR013198">
    <property type="entry name" value="GTP_trans_reg_CodY_C"/>
</dbReference>
<dbReference type="InterPro" id="IPR010312">
    <property type="entry name" value="Transc_reg_CodY_N"/>
</dbReference>
<dbReference type="InterPro" id="IPR036388">
    <property type="entry name" value="WH-like_DNA-bd_sf"/>
</dbReference>
<dbReference type="InterPro" id="IPR036390">
    <property type="entry name" value="WH_DNA-bd_sf"/>
</dbReference>
<dbReference type="NCBIfam" id="TIGR02787">
    <property type="entry name" value="codY_Gpos"/>
    <property type="match status" value="1"/>
</dbReference>
<dbReference type="NCBIfam" id="NF003170">
    <property type="entry name" value="PRK04158.1"/>
    <property type="match status" value="1"/>
</dbReference>
<dbReference type="PANTHER" id="PTHR40062:SF1">
    <property type="entry name" value="GLOBAL TRANSCRIPTIONAL REGULATOR CODY"/>
    <property type="match status" value="1"/>
</dbReference>
<dbReference type="PANTHER" id="PTHR40062">
    <property type="entry name" value="GTP-SENSING TRANSCRIPTIONAL PLEIOTROPIC REPRESSOR CODY"/>
    <property type="match status" value="1"/>
</dbReference>
<dbReference type="Pfam" id="PF06018">
    <property type="entry name" value="CodY"/>
    <property type="match status" value="1"/>
</dbReference>
<dbReference type="Pfam" id="PF08222">
    <property type="entry name" value="HTH_CodY"/>
    <property type="match status" value="1"/>
</dbReference>
<dbReference type="PIRSF" id="PIRSF011572">
    <property type="entry name" value="GTP_sensing_CodY"/>
    <property type="match status" value="1"/>
</dbReference>
<dbReference type="SUPFAM" id="SSF46785">
    <property type="entry name" value="Winged helix' DNA-binding domain"/>
    <property type="match status" value="1"/>
</dbReference>
<sequence length="261" mass="28919">MANLLDKTRKITSILQRSVDSLEGDLPYNNMAAQLADIIDCNAAIVNGGGALLGFAMKYKTNNDRVEKFFKAKQLPEEYIRGISRVYDTQENIGIDSDLTIFPVELKDDFPDGLTTIAPIYGGGMRLGSFIIWRNDHDFVDDDLILVEIASTVVGLQLLHLQTENLEETIRKQTAINMAINTLSYSEIKAVSAILNELDGLEGRLTASVIADRIGITRSVIVNALRKLESAGIIESRSLGMKGTYLKVLNEGIYDKLKEYE</sequence>
<protein>
    <recommendedName>
        <fullName evidence="1">Global transcriptional regulator CodY</fullName>
    </recommendedName>
</protein>
<keyword id="KW-0963">Cytoplasm</keyword>
<keyword id="KW-0238">DNA-binding</keyword>
<keyword id="KW-0678">Repressor</keyword>
<keyword id="KW-0804">Transcription</keyword>
<keyword id="KW-0805">Transcription regulation</keyword>
<reference key="1">
    <citation type="journal article" date="2004" name="Nat. Biotechnol.">
        <title>Complete sequence and comparative genome analysis of the dairy bacterium Streptococcus thermophilus.</title>
        <authorList>
            <person name="Bolotin A."/>
            <person name="Quinquis B."/>
            <person name="Renault P."/>
            <person name="Sorokin A."/>
            <person name="Ehrlich S.D."/>
            <person name="Kulakauskas S."/>
            <person name="Lapidus A."/>
            <person name="Goltsman E."/>
            <person name="Mazur M."/>
            <person name="Pusch G.D."/>
            <person name="Fonstein M."/>
            <person name="Overbeek R."/>
            <person name="Kyprides N."/>
            <person name="Purnelle B."/>
            <person name="Prozzi D."/>
            <person name="Ngui K."/>
            <person name="Masuy D."/>
            <person name="Hancy F."/>
            <person name="Burteau S."/>
            <person name="Boutry M."/>
            <person name="Delcour J."/>
            <person name="Goffeau A."/>
            <person name="Hols P."/>
        </authorList>
    </citation>
    <scope>NUCLEOTIDE SEQUENCE [LARGE SCALE GENOMIC DNA]</scope>
    <source>
        <strain>CNRZ 1066</strain>
    </source>
</reference>